<protein>
    <recommendedName>
        <fullName evidence="1">Large ribosomal subunit protein uL30</fullName>
    </recommendedName>
    <alternativeName>
        <fullName evidence="2">50S ribosomal protein L30</fullName>
    </alternativeName>
</protein>
<proteinExistence type="inferred from homology"/>
<keyword id="KW-0687">Ribonucleoprotein</keyword>
<keyword id="KW-0689">Ribosomal protein</keyword>
<gene>
    <name evidence="1" type="primary">rpmD</name>
    <name type="ordered locus">ECDH10B_3477</name>
</gene>
<feature type="chain" id="PRO_1000144679" description="Large ribosomal subunit protein uL30">
    <location>
        <begin position="1"/>
        <end position="59"/>
    </location>
</feature>
<organism>
    <name type="scientific">Escherichia coli (strain K12 / DH10B)</name>
    <dbReference type="NCBI Taxonomy" id="316385"/>
    <lineage>
        <taxon>Bacteria</taxon>
        <taxon>Pseudomonadati</taxon>
        <taxon>Pseudomonadota</taxon>
        <taxon>Gammaproteobacteria</taxon>
        <taxon>Enterobacterales</taxon>
        <taxon>Enterobacteriaceae</taxon>
        <taxon>Escherichia</taxon>
    </lineage>
</organism>
<reference key="1">
    <citation type="journal article" date="2008" name="J. Bacteriol.">
        <title>The complete genome sequence of Escherichia coli DH10B: insights into the biology of a laboratory workhorse.</title>
        <authorList>
            <person name="Durfee T."/>
            <person name="Nelson R."/>
            <person name="Baldwin S."/>
            <person name="Plunkett G. III"/>
            <person name="Burland V."/>
            <person name="Mau B."/>
            <person name="Petrosino J.F."/>
            <person name="Qin X."/>
            <person name="Muzny D.M."/>
            <person name="Ayele M."/>
            <person name="Gibbs R.A."/>
            <person name="Csorgo B."/>
            <person name="Posfai G."/>
            <person name="Weinstock G.M."/>
            <person name="Blattner F.R."/>
        </authorList>
    </citation>
    <scope>NUCLEOTIDE SEQUENCE [LARGE SCALE GENOMIC DNA]</scope>
    <source>
        <strain>K12 / DH10B</strain>
    </source>
</reference>
<accession>B1X6F4</accession>
<evidence type="ECO:0000255" key="1">
    <source>
        <dbReference type="HAMAP-Rule" id="MF_01371"/>
    </source>
</evidence>
<evidence type="ECO:0000305" key="2"/>
<sequence length="59" mass="6542">MAKTIKITQTRSAIGRLPKHKATLLGLGLRRIGHTVEREDTPAIRGMINAVSFMVKVEE</sequence>
<dbReference type="EMBL" id="CP000948">
    <property type="protein sequence ID" value="ACB04364.1"/>
    <property type="molecule type" value="Genomic_DNA"/>
</dbReference>
<dbReference type="RefSeq" id="WP_001140433.1">
    <property type="nucleotide sequence ID" value="NC_010473.1"/>
</dbReference>
<dbReference type="SMR" id="B1X6F4"/>
<dbReference type="GeneID" id="93778685"/>
<dbReference type="KEGG" id="ecd:ECDH10B_3477"/>
<dbReference type="HOGENOM" id="CLU_131047_1_4_6"/>
<dbReference type="GO" id="GO:0022625">
    <property type="term" value="C:cytosolic large ribosomal subunit"/>
    <property type="evidence" value="ECO:0007669"/>
    <property type="project" value="TreeGrafter"/>
</dbReference>
<dbReference type="GO" id="GO:0003735">
    <property type="term" value="F:structural constituent of ribosome"/>
    <property type="evidence" value="ECO:0007669"/>
    <property type="project" value="InterPro"/>
</dbReference>
<dbReference type="GO" id="GO:0006412">
    <property type="term" value="P:translation"/>
    <property type="evidence" value="ECO:0007669"/>
    <property type="project" value="UniProtKB-UniRule"/>
</dbReference>
<dbReference type="CDD" id="cd01658">
    <property type="entry name" value="Ribosomal_L30"/>
    <property type="match status" value="1"/>
</dbReference>
<dbReference type="FunFam" id="3.30.1390.20:FF:000001">
    <property type="entry name" value="50S ribosomal protein L30"/>
    <property type="match status" value="1"/>
</dbReference>
<dbReference type="Gene3D" id="3.30.1390.20">
    <property type="entry name" value="Ribosomal protein L30, ferredoxin-like fold domain"/>
    <property type="match status" value="1"/>
</dbReference>
<dbReference type="HAMAP" id="MF_01371_B">
    <property type="entry name" value="Ribosomal_uL30_B"/>
    <property type="match status" value="1"/>
</dbReference>
<dbReference type="InterPro" id="IPR036919">
    <property type="entry name" value="Ribo_uL30_ferredoxin-like_sf"/>
</dbReference>
<dbReference type="InterPro" id="IPR005996">
    <property type="entry name" value="Ribosomal_uL30_bac-type"/>
</dbReference>
<dbReference type="InterPro" id="IPR018038">
    <property type="entry name" value="Ribosomal_uL30_CS"/>
</dbReference>
<dbReference type="InterPro" id="IPR016082">
    <property type="entry name" value="Ribosomal_uL30_ferredoxin-like"/>
</dbReference>
<dbReference type="NCBIfam" id="TIGR01308">
    <property type="entry name" value="rpmD_bact"/>
    <property type="match status" value="1"/>
</dbReference>
<dbReference type="PANTHER" id="PTHR15892:SF2">
    <property type="entry name" value="LARGE RIBOSOMAL SUBUNIT PROTEIN UL30M"/>
    <property type="match status" value="1"/>
</dbReference>
<dbReference type="PANTHER" id="PTHR15892">
    <property type="entry name" value="MITOCHONDRIAL RIBOSOMAL PROTEIN L30"/>
    <property type="match status" value="1"/>
</dbReference>
<dbReference type="Pfam" id="PF00327">
    <property type="entry name" value="Ribosomal_L30"/>
    <property type="match status" value="1"/>
</dbReference>
<dbReference type="PIRSF" id="PIRSF002211">
    <property type="entry name" value="Ribosomal_L30_bac-type"/>
    <property type="match status" value="1"/>
</dbReference>
<dbReference type="SUPFAM" id="SSF55129">
    <property type="entry name" value="Ribosomal protein L30p/L7e"/>
    <property type="match status" value="1"/>
</dbReference>
<dbReference type="PROSITE" id="PS00634">
    <property type="entry name" value="RIBOSOMAL_L30"/>
    <property type="match status" value="1"/>
</dbReference>
<name>RL30_ECODH</name>
<comment type="subunit">
    <text evidence="1">Part of the 50S ribosomal subunit.</text>
</comment>
<comment type="similarity">
    <text evidence="1">Belongs to the universal ribosomal protein uL30 family.</text>
</comment>